<sequence length="156" mass="17074">MKHNDKQEKLAKAFKALLKEERFGSQAEIVTALQEMGFENINQSKVSRMLSRFGAVRTRNAKMEMVYCLPVELGVPTTSSPLKNLVLDVDHNGALVVIHTSPGAAQLIARLLDSLGKAEGILGTIAGDDTIFITPTSDTDIEELYLSALELFEQTP</sequence>
<proteinExistence type="inferred from homology"/>
<evidence type="ECO:0000255" key="1">
    <source>
        <dbReference type="HAMAP-Rule" id="MF_00173"/>
    </source>
</evidence>
<organism>
    <name type="scientific">Aeromonas salmonicida (strain A449)</name>
    <dbReference type="NCBI Taxonomy" id="382245"/>
    <lineage>
        <taxon>Bacteria</taxon>
        <taxon>Pseudomonadati</taxon>
        <taxon>Pseudomonadota</taxon>
        <taxon>Gammaproteobacteria</taxon>
        <taxon>Aeromonadales</taxon>
        <taxon>Aeromonadaceae</taxon>
        <taxon>Aeromonas</taxon>
    </lineage>
</organism>
<dbReference type="EMBL" id="CP000644">
    <property type="protein sequence ID" value="ABO88817.1"/>
    <property type="molecule type" value="Genomic_DNA"/>
</dbReference>
<dbReference type="RefSeq" id="WP_005308670.1">
    <property type="nucleotide sequence ID" value="NC_009348.1"/>
</dbReference>
<dbReference type="SMR" id="A4SIU5"/>
<dbReference type="STRING" id="29491.GCA_000820065_01841"/>
<dbReference type="GeneID" id="97859222"/>
<dbReference type="KEGG" id="asa:ASA_0654"/>
<dbReference type="eggNOG" id="COG1438">
    <property type="taxonomic scope" value="Bacteria"/>
</dbReference>
<dbReference type="HOGENOM" id="CLU_097103_2_0_6"/>
<dbReference type="UniPathway" id="UPA00068"/>
<dbReference type="Proteomes" id="UP000000225">
    <property type="component" value="Chromosome"/>
</dbReference>
<dbReference type="GO" id="GO:0005737">
    <property type="term" value="C:cytoplasm"/>
    <property type="evidence" value="ECO:0007669"/>
    <property type="project" value="UniProtKB-SubCell"/>
</dbReference>
<dbReference type="GO" id="GO:0034618">
    <property type="term" value="F:arginine binding"/>
    <property type="evidence" value="ECO:0007669"/>
    <property type="project" value="InterPro"/>
</dbReference>
<dbReference type="GO" id="GO:0003677">
    <property type="term" value="F:DNA binding"/>
    <property type="evidence" value="ECO:0007669"/>
    <property type="project" value="UniProtKB-KW"/>
</dbReference>
<dbReference type="GO" id="GO:0003700">
    <property type="term" value="F:DNA-binding transcription factor activity"/>
    <property type="evidence" value="ECO:0007669"/>
    <property type="project" value="UniProtKB-UniRule"/>
</dbReference>
<dbReference type="GO" id="GO:0006526">
    <property type="term" value="P:L-arginine biosynthetic process"/>
    <property type="evidence" value="ECO:0007669"/>
    <property type="project" value="UniProtKB-UniPathway"/>
</dbReference>
<dbReference type="GO" id="GO:0051259">
    <property type="term" value="P:protein complex oligomerization"/>
    <property type="evidence" value="ECO:0007669"/>
    <property type="project" value="InterPro"/>
</dbReference>
<dbReference type="GO" id="GO:1900079">
    <property type="term" value="P:regulation of arginine biosynthetic process"/>
    <property type="evidence" value="ECO:0007669"/>
    <property type="project" value="UniProtKB-UniRule"/>
</dbReference>
<dbReference type="Gene3D" id="3.30.1360.40">
    <property type="match status" value="1"/>
</dbReference>
<dbReference type="Gene3D" id="1.10.10.10">
    <property type="entry name" value="Winged helix-like DNA-binding domain superfamily/Winged helix DNA-binding domain"/>
    <property type="match status" value="1"/>
</dbReference>
<dbReference type="HAMAP" id="MF_00173">
    <property type="entry name" value="Arg_repressor"/>
    <property type="match status" value="1"/>
</dbReference>
<dbReference type="InterPro" id="IPR001669">
    <property type="entry name" value="Arg_repress"/>
</dbReference>
<dbReference type="InterPro" id="IPR020899">
    <property type="entry name" value="Arg_repress_C"/>
</dbReference>
<dbReference type="InterPro" id="IPR036251">
    <property type="entry name" value="Arg_repress_C_sf"/>
</dbReference>
<dbReference type="InterPro" id="IPR020900">
    <property type="entry name" value="Arg_repress_DNA-bd"/>
</dbReference>
<dbReference type="InterPro" id="IPR036388">
    <property type="entry name" value="WH-like_DNA-bd_sf"/>
</dbReference>
<dbReference type="InterPro" id="IPR036390">
    <property type="entry name" value="WH_DNA-bd_sf"/>
</dbReference>
<dbReference type="NCBIfam" id="TIGR01529">
    <property type="entry name" value="argR_whole"/>
    <property type="match status" value="1"/>
</dbReference>
<dbReference type="NCBIfam" id="NF003457">
    <property type="entry name" value="PRK05066.1"/>
    <property type="match status" value="1"/>
</dbReference>
<dbReference type="PANTHER" id="PTHR34471">
    <property type="entry name" value="ARGININE REPRESSOR"/>
    <property type="match status" value="1"/>
</dbReference>
<dbReference type="PANTHER" id="PTHR34471:SF1">
    <property type="entry name" value="ARGININE REPRESSOR"/>
    <property type="match status" value="1"/>
</dbReference>
<dbReference type="Pfam" id="PF01316">
    <property type="entry name" value="Arg_repressor"/>
    <property type="match status" value="1"/>
</dbReference>
<dbReference type="Pfam" id="PF02863">
    <property type="entry name" value="Arg_repressor_C"/>
    <property type="match status" value="1"/>
</dbReference>
<dbReference type="PRINTS" id="PR01467">
    <property type="entry name" value="ARGREPRESSOR"/>
</dbReference>
<dbReference type="SUPFAM" id="SSF55252">
    <property type="entry name" value="C-terminal domain of arginine repressor"/>
    <property type="match status" value="1"/>
</dbReference>
<dbReference type="SUPFAM" id="SSF46785">
    <property type="entry name" value="Winged helix' DNA-binding domain"/>
    <property type="match status" value="1"/>
</dbReference>
<gene>
    <name evidence="1" type="primary">argR</name>
    <name type="ordered locus">ASA_0654</name>
</gene>
<comment type="function">
    <text evidence="1">Regulates arginine biosynthesis genes.</text>
</comment>
<comment type="pathway">
    <text>Amino-acid biosynthesis; L-arginine biosynthesis [regulation].</text>
</comment>
<comment type="subcellular location">
    <subcellularLocation>
        <location evidence="1">Cytoplasm</location>
    </subcellularLocation>
</comment>
<comment type="similarity">
    <text evidence="1">Belongs to the ArgR family.</text>
</comment>
<accession>A4SIU5</accession>
<reference key="1">
    <citation type="journal article" date="2008" name="BMC Genomics">
        <title>The genome of Aeromonas salmonicida subsp. salmonicida A449: insights into the evolution of a fish pathogen.</title>
        <authorList>
            <person name="Reith M.E."/>
            <person name="Singh R.K."/>
            <person name="Curtis B."/>
            <person name="Boyd J.M."/>
            <person name="Bouevitch A."/>
            <person name="Kimball J."/>
            <person name="Munholland J."/>
            <person name="Murphy C."/>
            <person name="Sarty D."/>
            <person name="Williams J."/>
            <person name="Nash J.H."/>
            <person name="Johnson S.C."/>
            <person name="Brown L.L."/>
        </authorList>
    </citation>
    <scope>NUCLEOTIDE SEQUENCE [LARGE SCALE GENOMIC DNA]</scope>
    <source>
        <strain>A449</strain>
    </source>
</reference>
<protein>
    <recommendedName>
        <fullName evidence="1">Arginine repressor</fullName>
    </recommendedName>
</protein>
<name>ARGR_AERS4</name>
<keyword id="KW-0028">Amino-acid biosynthesis</keyword>
<keyword id="KW-0055">Arginine biosynthesis</keyword>
<keyword id="KW-0963">Cytoplasm</keyword>
<keyword id="KW-0238">DNA-binding</keyword>
<keyword id="KW-0678">Repressor</keyword>
<keyword id="KW-0804">Transcription</keyword>
<keyword id="KW-0805">Transcription regulation</keyword>
<feature type="chain" id="PRO_1000023542" description="Arginine repressor">
    <location>
        <begin position="1"/>
        <end position="156"/>
    </location>
</feature>